<reference key="1">
    <citation type="journal article" date="2000" name="Genomics">
        <title>A novel conserved cochlear gene, OTOR: identification, expression analysis, and chromosomal mapping.</title>
        <authorList>
            <person name="Robertson N.G."/>
            <person name="Heller S."/>
            <person name="Lin J.S."/>
            <person name="Resendes B.L."/>
            <person name="Weremowicz S."/>
            <person name="Denis C.S."/>
            <person name="Bell A.M."/>
            <person name="Hudspeth A.J."/>
            <person name="Morton C.C."/>
        </authorList>
    </citation>
    <scope>NUCLEOTIDE SEQUENCE [MRNA]</scope>
    <source>
        <tissue>Cochlea</tissue>
    </source>
</reference>
<reference key="2">
    <citation type="journal article" date="2000" name="J. Biol. Chem.">
        <title>Fdp, a new fibrocyte-derived protein related to MIA/CD-RAP, has an in vitro effect on the early differentiation of the inner ear mesenchyme.</title>
        <authorList>
            <person name="Cohen-Salmon M."/>
            <person name="Frenz D."/>
            <person name="Liu W."/>
            <person name="Verpy E."/>
            <person name="Voegeling S."/>
            <person name="Petit C."/>
        </authorList>
    </citation>
    <scope>NUCLEOTIDE SEQUENCE [MRNA]</scope>
</reference>
<reference key="3">
    <citation type="journal article" date="2001" name="Genomics">
        <title>Identification and characterization of an inner ear-expressed human melanoma inhibitory activity (MIA)-like gene (MIAL) with a frequent polymorphism that abolishes translation.</title>
        <authorList>
            <person name="Rendtorff N.D."/>
            <person name="Frodin M."/>
            <person name="Attie-Bitach T."/>
            <person name="Vekemans M."/>
            <person name="Tommerup N."/>
        </authorList>
    </citation>
    <scope>NUCLEOTIDE SEQUENCE [MRNA]</scope>
    <source>
        <tissue>Brain</tissue>
        <tissue>Cochlea</tissue>
    </source>
</reference>
<reference key="4">
    <citation type="journal article" date="2003" name="Genome Res.">
        <title>The secreted protein discovery initiative (SPDI), a large-scale effort to identify novel human secreted and transmembrane proteins: a bioinformatics assessment.</title>
        <authorList>
            <person name="Clark H.F."/>
            <person name="Gurney A.L."/>
            <person name="Abaya E."/>
            <person name="Baker K."/>
            <person name="Baldwin D.T."/>
            <person name="Brush J."/>
            <person name="Chen J."/>
            <person name="Chow B."/>
            <person name="Chui C."/>
            <person name="Crowley C."/>
            <person name="Currell B."/>
            <person name="Deuel B."/>
            <person name="Dowd P."/>
            <person name="Eaton D."/>
            <person name="Foster J.S."/>
            <person name="Grimaldi C."/>
            <person name="Gu Q."/>
            <person name="Hass P.E."/>
            <person name="Heldens S."/>
            <person name="Huang A."/>
            <person name="Kim H.S."/>
            <person name="Klimowski L."/>
            <person name="Jin Y."/>
            <person name="Johnson S."/>
            <person name="Lee J."/>
            <person name="Lewis L."/>
            <person name="Liao D."/>
            <person name="Mark M.R."/>
            <person name="Robbie E."/>
            <person name="Sanchez C."/>
            <person name="Schoenfeld J."/>
            <person name="Seshagiri S."/>
            <person name="Simmons L."/>
            <person name="Singh J."/>
            <person name="Smith V."/>
            <person name="Stinson J."/>
            <person name="Vagts A."/>
            <person name="Vandlen R.L."/>
            <person name="Watanabe C."/>
            <person name="Wieand D."/>
            <person name="Woods K."/>
            <person name="Xie M.-H."/>
            <person name="Yansura D.G."/>
            <person name="Yi S."/>
            <person name="Yu G."/>
            <person name="Yuan J."/>
            <person name="Zhang M."/>
            <person name="Zhang Z."/>
            <person name="Goddard A.D."/>
            <person name="Wood W.I."/>
            <person name="Godowski P.J."/>
            <person name="Gray A.M."/>
        </authorList>
    </citation>
    <scope>NUCLEOTIDE SEQUENCE [LARGE SCALE MRNA]</scope>
</reference>
<reference key="5">
    <citation type="journal article" date="2001" name="Nature">
        <title>The DNA sequence and comparative analysis of human chromosome 20.</title>
        <authorList>
            <person name="Deloukas P."/>
            <person name="Matthews L.H."/>
            <person name="Ashurst J.L."/>
            <person name="Burton J."/>
            <person name="Gilbert J.G.R."/>
            <person name="Jones M."/>
            <person name="Stavrides G."/>
            <person name="Almeida J.P."/>
            <person name="Babbage A.K."/>
            <person name="Bagguley C.L."/>
            <person name="Bailey J."/>
            <person name="Barlow K.F."/>
            <person name="Bates K.N."/>
            <person name="Beard L.M."/>
            <person name="Beare D.M."/>
            <person name="Beasley O.P."/>
            <person name="Bird C.P."/>
            <person name="Blakey S.E."/>
            <person name="Bridgeman A.M."/>
            <person name="Brown A.J."/>
            <person name="Buck D."/>
            <person name="Burrill W.D."/>
            <person name="Butler A.P."/>
            <person name="Carder C."/>
            <person name="Carter N.P."/>
            <person name="Chapman J.C."/>
            <person name="Clamp M."/>
            <person name="Clark G."/>
            <person name="Clark L.N."/>
            <person name="Clark S.Y."/>
            <person name="Clee C.M."/>
            <person name="Clegg S."/>
            <person name="Cobley V.E."/>
            <person name="Collier R.E."/>
            <person name="Connor R.E."/>
            <person name="Corby N.R."/>
            <person name="Coulson A."/>
            <person name="Coville G.J."/>
            <person name="Deadman R."/>
            <person name="Dhami P.D."/>
            <person name="Dunn M."/>
            <person name="Ellington A.G."/>
            <person name="Frankland J.A."/>
            <person name="Fraser A."/>
            <person name="French L."/>
            <person name="Garner P."/>
            <person name="Grafham D.V."/>
            <person name="Griffiths C."/>
            <person name="Griffiths M.N.D."/>
            <person name="Gwilliam R."/>
            <person name="Hall R.E."/>
            <person name="Hammond S."/>
            <person name="Harley J.L."/>
            <person name="Heath P.D."/>
            <person name="Ho S."/>
            <person name="Holden J.L."/>
            <person name="Howden P.J."/>
            <person name="Huckle E."/>
            <person name="Hunt A.R."/>
            <person name="Hunt S.E."/>
            <person name="Jekosch K."/>
            <person name="Johnson C.M."/>
            <person name="Johnson D."/>
            <person name="Kay M.P."/>
            <person name="Kimberley A.M."/>
            <person name="King A."/>
            <person name="Knights A."/>
            <person name="Laird G.K."/>
            <person name="Lawlor S."/>
            <person name="Lehvaeslaiho M.H."/>
            <person name="Leversha M.A."/>
            <person name="Lloyd C."/>
            <person name="Lloyd D.M."/>
            <person name="Lovell J.D."/>
            <person name="Marsh V.L."/>
            <person name="Martin S.L."/>
            <person name="McConnachie L.J."/>
            <person name="McLay K."/>
            <person name="McMurray A.A."/>
            <person name="Milne S.A."/>
            <person name="Mistry D."/>
            <person name="Moore M.J.F."/>
            <person name="Mullikin J.C."/>
            <person name="Nickerson T."/>
            <person name="Oliver K."/>
            <person name="Parker A."/>
            <person name="Patel R."/>
            <person name="Pearce T.A.V."/>
            <person name="Peck A.I."/>
            <person name="Phillimore B.J.C.T."/>
            <person name="Prathalingam S.R."/>
            <person name="Plumb R.W."/>
            <person name="Ramsay H."/>
            <person name="Rice C.M."/>
            <person name="Ross M.T."/>
            <person name="Scott C.E."/>
            <person name="Sehra H.K."/>
            <person name="Shownkeen R."/>
            <person name="Sims S."/>
            <person name="Skuce C.D."/>
            <person name="Smith M.L."/>
            <person name="Soderlund C."/>
            <person name="Steward C.A."/>
            <person name="Sulston J.E."/>
            <person name="Swann R.M."/>
            <person name="Sycamore N."/>
            <person name="Taylor R."/>
            <person name="Tee L."/>
            <person name="Thomas D.W."/>
            <person name="Thorpe A."/>
            <person name="Tracey A."/>
            <person name="Tromans A.C."/>
            <person name="Vaudin M."/>
            <person name="Wall M."/>
            <person name="Wallis J.M."/>
            <person name="Whitehead S.L."/>
            <person name="Whittaker P."/>
            <person name="Willey D.L."/>
            <person name="Williams L."/>
            <person name="Williams S.A."/>
            <person name="Wilming L."/>
            <person name="Wray P.W."/>
            <person name="Hubbard T."/>
            <person name="Durbin R.M."/>
            <person name="Bentley D.R."/>
            <person name="Beck S."/>
            <person name="Rogers J."/>
        </authorList>
    </citation>
    <scope>NUCLEOTIDE SEQUENCE [LARGE SCALE GENOMIC DNA]</scope>
</reference>
<reference key="6">
    <citation type="submission" date="2005-09" db="EMBL/GenBank/DDBJ databases">
        <authorList>
            <person name="Mural R.J."/>
            <person name="Istrail S."/>
            <person name="Sutton G.G."/>
            <person name="Florea L."/>
            <person name="Halpern A.L."/>
            <person name="Mobarry C.M."/>
            <person name="Lippert R."/>
            <person name="Walenz B."/>
            <person name="Shatkay H."/>
            <person name="Dew I."/>
            <person name="Miller J.R."/>
            <person name="Flanigan M.J."/>
            <person name="Edwards N.J."/>
            <person name="Bolanos R."/>
            <person name="Fasulo D."/>
            <person name="Halldorsson B.V."/>
            <person name="Hannenhalli S."/>
            <person name="Turner R."/>
            <person name="Yooseph S."/>
            <person name="Lu F."/>
            <person name="Nusskern D.R."/>
            <person name="Shue B.C."/>
            <person name="Zheng X.H."/>
            <person name="Zhong F."/>
            <person name="Delcher A.L."/>
            <person name="Huson D.H."/>
            <person name="Kravitz S.A."/>
            <person name="Mouchard L."/>
            <person name="Reinert K."/>
            <person name="Remington K.A."/>
            <person name="Clark A.G."/>
            <person name="Waterman M.S."/>
            <person name="Eichler E.E."/>
            <person name="Adams M.D."/>
            <person name="Hunkapiller M.W."/>
            <person name="Myers E.W."/>
            <person name="Venter J.C."/>
        </authorList>
    </citation>
    <scope>NUCLEOTIDE SEQUENCE [LARGE SCALE GENOMIC DNA]</scope>
    <scope>VARIANT PRO-31</scope>
</reference>
<reference key="7">
    <citation type="journal article" date="2004" name="Genome Res.">
        <title>The status, quality, and expansion of the NIH full-length cDNA project: the Mammalian Gene Collection (MGC).</title>
        <authorList>
            <consortium name="The MGC Project Team"/>
        </authorList>
    </citation>
    <scope>NUCLEOTIDE SEQUENCE [LARGE SCALE MRNA]</scope>
    <source>
        <tissue>Cerebellum</tissue>
    </source>
</reference>
<reference key="8">
    <citation type="journal article" date="2004" name="Protein Sci.">
        <title>Signal peptide prediction based on analysis of experimentally verified cleavage sites.</title>
        <authorList>
            <person name="Zhang Z."/>
            <person name="Henzel W.J."/>
        </authorList>
    </citation>
    <scope>PROTEIN SEQUENCE OF 18-32</scope>
</reference>
<organism>
    <name type="scientific">Homo sapiens</name>
    <name type="common">Human</name>
    <dbReference type="NCBI Taxonomy" id="9606"/>
    <lineage>
        <taxon>Eukaryota</taxon>
        <taxon>Metazoa</taxon>
        <taxon>Chordata</taxon>
        <taxon>Craniata</taxon>
        <taxon>Vertebrata</taxon>
        <taxon>Euteleostomi</taxon>
        <taxon>Mammalia</taxon>
        <taxon>Eutheria</taxon>
        <taxon>Euarchontoglires</taxon>
        <taxon>Primates</taxon>
        <taxon>Haplorrhini</taxon>
        <taxon>Catarrhini</taxon>
        <taxon>Hominidae</taxon>
        <taxon>Homo</taxon>
    </lineage>
</organism>
<sequence>MARILLLFLPGLVAVCAVHGIFMDRLASKKLCADDECVYTISLASAQEDYNAPDCRFINVKKGQQIYVYSKLVKENGAGEFWAGSVYGDGQDEMGVVGYFPRNLVKEQRVYQEATKEVPTTDIDFFCE</sequence>
<feature type="signal peptide" evidence="3">
    <location>
        <begin position="1"/>
        <end position="17"/>
    </location>
</feature>
<feature type="chain" id="PRO_0000019033" description="Otoraplin">
    <location>
        <begin position="18"/>
        <end position="128"/>
    </location>
</feature>
<feature type="domain" description="SH3" evidence="2">
    <location>
        <begin position="39"/>
        <end position="110"/>
    </location>
</feature>
<feature type="disulfide bond" evidence="1">
    <location>
        <begin position="32"/>
        <end position="37"/>
    </location>
</feature>
<feature type="disulfide bond" evidence="1">
    <location>
        <begin position="55"/>
        <end position="127"/>
    </location>
</feature>
<feature type="sequence variant" id="VAR_024537" description="In dbSNP:rs6135876." evidence="4">
    <original>L</original>
    <variation>P</variation>
    <location>
        <position position="31"/>
    </location>
</feature>
<dbReference type="EMBL" id="AF233261">
    <property type="protein sequence ID" value="AAF82078.1"/>
    <property type="molecule type" value="mRNA"/>
</dbReference>
<dbReference type="EMBL" id="AF243505">
    <property type="protein sequence ID" value="AAG42356.1"/>
    <property type="molecule type" value="mRNA"/>
</dbReference>
<dbReference type="EMBL" id="AJ242552">
    <property type="protein sequence ID" value="CAC27443.1"/>
    <property type="molecule type" value="mRNA"/>
</dbReference>
<dbReference type="EMBL" id="AJ252324">
    <property type="protein sequence ID" value="CAC28085.1"/>
    <property type="molecule type" value="Genomic_DNA"/>
</dbReference>
<dbReference type="EMBL" id="AJ252325">
    <property type="protein sequence ID" value="CAC28085.1"/>
    <property type="status" value="JOINED"/>
    <property type="molecule type" value="Genomic_DNA"/>
</dbReference>
<dbReference type="EMBL" id="AJ252326">
    <property type="protein sequence ID" value="CAC28085.1"/>
    <property type="status" value="JOINED"/>
    <property type="molecule type" value="Genomic_DNA"/>
</dbReference>
<dbReference type="EMBL" id="AJ252327">
    <property type="protein sequence ID" value="CAC28085.1"/>
    <property type="status" value="JOINED"/>
    <property type="molecule type" value="Genomic_DNA"/>
</dbReference>
<dbReference type="EMBL" id="AY359082">
    <property type="protein sequence ID" value="AAQ89441.1"/>
    <property type="molecule type" value="mRNA"/>
</dbReference>
<dbReference type="EMBL" id="AL034428">
    <property type="status" value="NOT_ANNOTATED_CDS"/>
    <property type="molecule type" value="Genomic_DNA"/>
</dbReference>
<dbReference type="EMBL" id="CH471133">
    <property type="protein sequence ID" value="EAX10282.1"/>
    <property type="molecule type" value="Genomic_DNA"/>
</dbReference>
<dbReference type="EMBL" id="CH471133">
    <property type="protein sequence ID" value="EAX10283.1"/>
    <property type="molecule type" value="Genomic_DNA"/>
</dbReference>
<dbReference type="EMBL" id="BC101688">
    <property type="protein sequence ID" value="AAI01689.1"/>
    <property type="molecule type" value="mRNA"/>
</dbReference>
<dbReference type="EMBL" id="BC101690">
    <property type="protein sequence ID" value="AAI01691.1"/>
    <property type="molecule type" value="mRNA"/>
</dbReference>
<dbReference type="CCDS" id="CCDS13124.1"/>
<dbReference type="RefSeq" id="NP_064542.1">
    <property type="nucleotide sequence ID" value="NM_020157.4"/>
</dbReference>
<dbReference type="SMR" id="Q9NRC9"/>
<dbReference type="BioGRID" id="121242">
    <property type="interactions" value="1"/>
</dbReference>
<dbReference type="FunCoup" id="Q9NRC9">
    <property type="interactions" value="5"/>
</dbReference>
<dbReference type="IntAct" id="Q9NRC9">
    <property type="interactions" value="2"/>
</dbReference>
<dbReference type="STRING" id="9606.ENSP00000246081"/>
<dbReference type="iPTMnet" id="Q9NRC9"/>
<dbReference type="PhosphoSitePlus" id="Q9NRC9"/>
<dbReference type="BioMuta" id="OTOR"/>
<dbReference type="DMDM" id="13124388"/>
<dbReference type="PaxDb" id="9606-ENSP00000246081"/>
<dbReference type="PeptideAtlas" id="Q9NRC9"/>
<dbReference type="ProteomicsDB" id="82336"/>
<dbReference type="Antibodypedia" id="9190">
    <property type="antibodies" value="66 antibodies from 21 providers"/>
</dbReference>
<dbReference type="DNASU" id="56914"/>
<dbReference type="Ensembl" id="ENST00000246081.3">
    <property type="protein sequence ID" value="ENSP00000246081.3"/>
    <property type="gene ID" value="ENSG00000125879.5"/>
</dbReference>
<dbReference type="GeneID" id="56914"/>
<dbReference type="KEGG" id="hsa:56914"/>
<dbReference type="MANE-Select" id="ENST00000246081.3">
    <property type="protein sequence ID" value="ENSP00000246081.3"/>
    <property type="RefSeq nucleotide sequence ID" value="NM_020157.4"/>
    <property type="RefSeq protein sequence ID" value="NP_064542.1"/>
</dbReference>
<dbReference type="UCSC" id="uc002wpj.5">
    <property type="organism name" value="human"/>
</dbReference>
<dbReference type="AGR" id="HGNC:8517"/>
<dbReference type="CTD" id="56914"/>
<dbReference type="DisGeNET" id="56914"/>
<dbReference type="GeneCards" id="OTOR"/>
<dbReference type="HGNC" id="HGNC:8517">
    <property type="gene designation" value="OTOR"/>
</dbReference>
<dbReference type="HPA" id="ENSG00000125879">
    <property type="expression patterns" value="Not detected"/>
</dbReference>
<dbReference type="MIM" id="606067">
    <property type="type" value="gene"/>
</dbReference>
<dbReference type="neXtProt" id="NX_Q9NRC9"/>
<dbReference type="OpenTargets" id="ENSG00000125879"/>
<dbReference type="PharmGKB" id="PA32843"/>
<dbReference type="VEuPathDB" id="HostDB:ENSG00000125879"/>
<dbReference type="eggNOG" id="ENOG502S18Q">
    <property type="taxonomic scope" value="Eukaryota"/>
</dbReference>
<dbReference type="GeneTree" id="ENSGT00950000182767"/>
<dbReference type="HOGENOM" id="CLU_158739_0_1_1"/>
<dbReference type="InParanoid" id="Q9NRC9"/>
<dbReference type="OMA" id="LCADDDC"/>
<dbReference type="OrthoDB" id="6627676at2759"/>
<dbReference type="PAN-GO" id="Q9NRC9">
    <property type="GO annotations" value="1 GO annotation based on evolutionary models"/>
</dbReference>
<dbReference type="PhylomeDB" id="Q9NRC9"/>
<dbReference type="TreeFam" id="TF332724"/>
<dbReference type="PathwayCommons" id="Q9NRC9"/>
<dbReference type="SignaLink" id="Q9NRC9"/>
<dbReference type="BioGRID-ORCS" id="56914">
    <property type="hits" value="8 hits in 1135 CRISPR screens"/>
</dbReference>
<dbReference type="ChiTaRS" id="OTOR">
    <property type="organism name" value="human"/>
</dbReference>
<dbReference type="GeneWiki" id="OTOR"/>
<dbReference type="GenomeRNAi" id="56914"/>
<dbReference type="Pharos" id="Q9NRC9">
    <property type="development level" value="Tbio"/>
</dbReference>
<dbReference type="PRO" id="PR:Q9NRC9"/>
<dbReference type="Proteomes" id="UP000005640">
    <property type="component" value="Chromosome 20"/>
</dbReference>
<dbReference type="RNAct" id="Q9NRC9">
    <property type="molecule type" value="protein"/>
</dbReference>
<dbReference type="Bgee" id="ENSG00000125879">
    <property type="expression patterns" value="Expressed in cochlea and 16 other cell types or tissues"/>
</dbReference>
<dbReference type="GO" id="GO:0005576">
    <property type="term" value="C:extracellular region"/>
    <property type="evidence" value="ECO:0007669"/>
    <property type="project" value="UniProtKB-SubCell"/>
</dbReference>
<dbReference type="GO" id="GO:0001502">
    <property type="term" value="P:cartilage condensation"/>
    <property type="evidence" value="ECO:0000318"/>
    <property type="project" value="GO_Central"/>
</dbReference>
<dbReference type="GO" id="GO:0007605">
    <property type="term" value="P:sensory perception of sound"/>
    <property type="evidence" value="ECO:0000304"/>
    <property type="project" value="ProtInc"/>
</dbReference>
<dbReference type="CDD" id="cd11891">
    <property type="entry name" value="MIAL"/>
    <property type="match status" value="1"/>
</dbReference>
<dbReference type="FunFam" id="2.30.30.40:FF:000175">
    <property type="entry name" value="Melanoma-derived growth regulatory protein"/>
    <property type="match status" value="1"/>
</dbReference>
<dbReference type="Gene3D" id="2.30.30.40">
    <property type="entry name" value="SH3 Domains"/>
    <property type="match status" value="1"/>
</dbReference>
<dbReference type="InterPro" id="IPR042801">
    <property type="entry name" value="OTOR"/>
</dbReference>
<dbReference type="InterPro" id="IPR035554">
    <property type="entry name" value="Otoraplin_SH3"/>
</dbReference>
<dbReference type="InterPro" id="IPR036028">
    <property type="entry name" value="SH3-like_dom_sf"/>
</dbReference>
<dbReference type="InterPro" id="IPR001452">
    <property type="entry name" value="SH3_domain"/>
</dbReference>
<dbReference type="PANTHER" id="PTHR47146">
    <property type="entry name" value="OTORAPLIN"/>
    <property type="match status" value="1"/>
</dbReference>
<dbReference type="PANTHER" id="PTHR47146:SF1">
    <property type="entry name" value="OTORAPLIN"/>
    <property type="match status" value="1"/>
</dbReference>
<dbReference type="Pfam" id="PF07653">
    <property type="entry name" value="SH3_2"/>
    <property type="match status" value="1"/>
</dbReference>
<dbReference type="SMART" id="SM00326">
    <property type="entry name" value="SH3"/>
    <property type="match status" value="1"/>
</dbReference>
<dbReference type="SUPFAM" id="SSF50044">
    <property type="entry name" value="SH3-domain"/>
    <property type="match status" value="1"/>
</dbReference>
<dbReference type="PROSITE" id="PS50002">
    <property type="entry name" value="SH3"/>
    <property type="match status" value="1"/>
</dbReference>
<evidence type="ECO:0000250" key="1"/>
<evidence type="ECO:0000255" key="2">
    <source>
        <dbReference type="PROSITE-ProRule" id="PRU00192"/>
    </source>
</evidence>
<evidence type="ECO:0000269" key="3">
    <source>
    </source>
</evidence>
<evidence type="ECO:0000269" key="4">
    <source ref="6"/>
</evidence>
<evidence type="ECO:0000305" key="5"/>
<gene>
    <name type="primary">OTOR</name>
    <name type="synonym">FDP</name>
    <name type="synonym">MIAL</name>
    <name type="ORF">UNQ3054/PRO9873</name>
</gene>
<keyword id="KW-0903">Direct protein sequencing</keyword>
<keyword id="KW-1015">Disulfide bond</keyword>
<keyword id="KW-1185">Reference proteome</keyword>
<keyword id="KW-0964">Secreted</keyword>
<keyword id="KW-0728">SH3 domain</keyword>
<keyword id="KW-0732">Signal</keyword>
<protein>
    <recommendedName>
        <fullName>Otoraplin</fullName>
    </recommendedName>
    <alternativeName>
        <fullName>Fibrocyte-derived protein</fullName>
    </alternativeName>
    <alternativeName>
        <fullName>Melanoma inhibitory activity-like protein</fullName>
    </alternativeName>
</protein>
<comment type="interaction">
    <interactant intactId="EBI-18311020">
        <id>Q9NRC9</id>
    </interactant>
    <interactant intactId="EBI-18304435">
        <id>Q5JX71</id>
        <label>FAM209A</label>
    </interactant>
    <organismsDiffer>false</organismsDiffer>
    <experiments>3</experiments>
</comment>
<comment type="subcellular location">
    <subcellularLocation>
        <location evidence="5">Secreted</location>
    </subcellularLocation>
</comment>
<comment type="tissue specificity">
    <text>Highly expressed in cochlea.</text>
</comment>
<comment type="similarity">
    <text evidence="5">Belongs to the MIA/OTOR family.</text>
</comment>
<proteinExistence type="evidence at protein level"/>
<name>OTOR_HUMAN</name>
<accession>Q9NRC9</accession>
<accession>D3DW22</accession>
<accession>Q3MIU6</accession>